<reference key="1">
    <citation type="submission" date="1997-06" db="EMBL/GenBank/DDBJ databases">
        <authorList>
            <person name="Borsani G."/>
            <person name="Barbieri A."/>
        </authorList>
    </citation>
    <scope>NUCLEOTIDE SEQUENCE [MRNA] (ISOFORM 1)</scope>
</reference>
<reference key="2">
    <citation type="journal article" date="1997" name="DNA Res.">
        <title>Prediction of the coding sequences of unidentified human genes. VIII. 78 new cDNA clones from brain which code for large proteins in vitro.</title>
        <authorList>
            <person name="Ishikawa K."/>
            <person name="Nagase T."/>
            <person name="Nakajima D."/>
            <person name="Seki N."/>
            <person name="Ohira M."/>
            <person name="Miyajima N."/>
            <person name="Tanaka A."/>
            <person name="Kotani H."/>
            <person name="Nomura N."/>
            <person name="Ohara O."/>
        </authorList>
    </citation>
    <scope>NUCLEOTIDE SEQUENCE [LARGE SCALE MRNA] (ISOFORM 2)</scope>
    <source>
        <tissue>Brain</tissue>
    </source>
</reference>
<reference key="3">
    <citation type="journal article" date="2000" name="EMBO J.">
        <title>Recruitment of human muscleblind proteins to (CUG)(n) expansions associated with myotonic dystrophy.</title>
        <authorList>
            <person name="Miller J.W."/>
            <person name="Urbinati C.R."/>
            <person name="Teng-Umnuay P."/>
            <person name="Stenberg M.G."/>
            <person name="Byrne B.J."/>
            <person name="Thornton C.A."/>
            <person name="Swanson M.S."/>
        </authorList>
    </citation>
    <scope>NUCLEOTIDE SEQUENCE [MRNA] (ISOFORMS 3 AND 4)</scope>
    <scope>FUNCTION</scope>
    <scope>ALTERNATIVE SPLICING</scope>
    <scope>SUBCELLULAR LOCATION</scope>
    <scope>RNA-BINDING</scope>
    <scope>TISSUE SPECIFICITY</scope>
    <scope>ROLE IN MYOTONIC DYSTROPHY</scope>
    <scope>IDENTIFICATION BY MASS SPECTROMETRY</scope>
</reference>
<reference key="4">
    <citation type="journal article" date="2001" name="Hum. Mol. Genet.">
        <title>Muscleblind localizes to nuclear foci of aberrant RNA in myotonic dystrophy types 1 and 2.</title>
        <authorList>
            <person name="Mankodi A."/>
            <person name="Urbinati C.R."/>
            <person name="Yuan Q.P."/>
            <person name="Moxley R.T."/>
            <person name="Sansone V."/>
            <person name="Krym M."/>
            <person name="Henderson D."/>
            <person name="Schalling M."/>
            <person name="Swanson M.S."/>
            <person name="Thornton C.A."/>
        </authorList>
    </citation>
    <scope>NUCLEOTIDE SEQUENCE [MRNA] (ISOFORM 5)</scope>
    <scope>SUBCELLULAR LOCATION</scope>
</reference>
<reference key="5">
    <citation type="submission" date="2001-01" db="EMBL/GenBank/DDBJ databases">
        <title>Study of the role of the MBNL gene in the origin myotonic dystrophies in humans.</title>
        <authorList>
            <person name="Pascual M."/>
            <person name="Terol J."/>
            <person name="Perez-Alonso M."/>
        </authorList>
    </citation>
    <scope>NUCLEOTIDE SEQUENCE [MRNA] (ISOFORM 5)</scope>
    <source>
        <tissue>Blood</tissue>
    </source>
</reference>
<reference key="6">
    <citation type="submission" date="2002-04" db="EMBL/GenBank/DDBJ databases">
        <title>Direct evidence that EXP/muscleblind interacts with CCUG tetranucleotide repeats.</title>
        <authorList>
            <person name="Kino Y."/>
            <person name="Ishiura S."/>
        </authorList>
    </citation>
    <scope>NUCLEOTIDE SEQUENCE [MRNA] (ISOFORMS 6 AND 7)</scope>
    <source>
        <tissue>Muscle</tissue>
    </source>
</reference>
<reference key="7">
    <citation type="journal article" date="2006" name="Nature">
        <title>The DNA sequence, annotation and analysis of human chromosome 3.</title>
        <authorList>
            <person name="Muzny D.M."/>
            <person name="Scherer S.E."/>
            <person name="Kaul R."/>
            <person name="Wang J."/>
            <person name="Yu J."/>
            <person name="Sudbrak R."/>
            <person name="Buhay C.J."/>
            <person name="Chen R."/>
            <person name="Cree A."/>
            <person name="Ding Y."/>
            <person name="Dugan-Rocha S."/>
            <person name="Gill R."/>
            <person name="Gunaratne P."/>
            <person name="Harris R.A."/>
            <person name="Hawes A.C."/>
            <person name="Hernandez J."/>
            <person name="Hodgson A.V."/>
            <person name="Hume J."/>
            <person name="Jackson A."/>
            <person name="Khan Z.M."/>
            <person name="Kovar-Smith C."/>
            <person name="Lewis L.R."/>
            <person name="Lozado R.J."/>
            <person name="Metzker M.L."/>
            <person name="Milosavljevic A."/>
            <person name="Miner G.R."/>
            <person name="Morgan M.B."/>
            <person name="Nazareth L.V."/>
            <person name="Scott G."/>
            <person name="Sodergren E."/>
            <person name="Song X.-Z."/>
            <person name="Steffen D."/>
            <person name="Wei S."/>
            <person name="Wheeler D.A."/>
            <person name="Wright M.W."/>
            <person name="Worley K.C."/>
            <person name="Yuan Y."/>
            <person name="Zhang Z."/>
            <person name="Adams C.Q."/>
            <person name="Ansari-Lari M.A."/>
            <person name="Ayele M."/>
            <person name="Brown M.J."/>
            <person name="Chen G."/>
            <person name="Chen Z."/>
            <person name="Clendenning J."/>
            <person name="Clerc-Blankenburg K.P."/>
            <person name="Chen R."/>
            <person name="Chen Z."/>
            <person name="Davis C."/>
            <person name="Delgado O."/>
            <person name="Dinh H.H."/>
            <person name="Dong W."/>
            <person name="Draper H."/>
            <person name="Ernst S."/>
            <person name="Fu G."/>
            <person name="Gonzalez-Garay M.L."/>
            <person name="Garcia D.K."/>
            <person name="Gillett W."/>
            <person name="Gu J."/>
            <person name="Hao B."/>
            <person name="Haugen E."/>
            <person name="Havlak P."/>
            <person name="He X."/>
            <person name="Hennig S."/>
            <person name="Hu S."/>
            <person name="Huang W."/>
            <person name="Jackson L.R."/>
            <person name="Jacob L.S."/>
            <person name="Kelly S.H."/>
            <person name="Kube M."/>
            <person name="Levy R."/>
            <person name="Li Z."/>
            <person name="Liu B."/>
            <person name="Liu J."/>
            <person name="Liu W."/>
            <person name="Lu J."/>
            <person name="Maheshwari M."/>
            <person name="Nguyen B.-V."/>
            <person name="Okwuonu G.O."/>
            <person name="Palmeiri A."/>
            <person name="Pasternak S."/>
            <person name="Perez L.M."/>
            <person name="Phelps K.A."/>
            <person name="Plopper F.J."/>
            <person name="Qiang B."/>
            <person name="Raymond C."/>
            <person name="Rodriguez R."/>
            <person name="Saenphimmachak C."/>
            <person name="Santibanez J."/>
            <person name="Shen H."/>
            <person name="Shen Y."/>
            <person name="Subramanian S."/>
            <person name="Tabor P.E."/>
            <person name="Verduzco D."/>
            <person name="Waldron L."/>
            <person name="Wang J."/>
            <person name="Wang J."/>
            <person name="Wang Q."/>
            <person name="Williams G.A."/>
            <person name="Wong G.K.-S."/>
            <person name="Yao Z."/>
            <person name="Zhang J."/>
            <person name="Zhang X."/>
            <person name="Zhao G."/>
            <person name="Zhou J."/>
            <person name="Zhou Y."/>
            <person name="Nelson D."/>
            <person name="Lehrach H."/>
            <person name="Reinhardt R."/>
            <person name="Naylor S.L."/>
            <person name="Yang H."/>
            <person name="Olson M."/>
            <person name="Weinstock G."/>
            <person name="Gibbs R.A."/>
        </authorList>
    </citation>
    <scope>NUCLEOTIDE SEQUENCE [LARGE SCALE GENOMIC DNA]</scope>
</reference>
<reference key="8">
    <citation type="submission" date="2005-09" db="EMBL/GenBank/DDBJ databases">
        <authorList>
            <person name="Mural R.J."/>
            <person name="Istrail S."/>
            <person name="Sutton G."/>
            <person name="Florea L."/>
            <person name="Halpern A.L."/>
            <person name="Mobarry C.M."/>
            <person name="Lippert R."/>
            <person name="Walenz B."/>
            <person name="Shatkay H."/>
            <person name="Dew I."/>
            <person name="Miller J.R."/>
            <person name="Flanigan M.J."/>
            <person name="Edwards N.J."/>
            <person name="Bolanos R."/>
            <person name="Fasulo D."/>
            <person name="Halldorsson B.V."/>
            <person name="Hannenhalli S."/>
            <person name="Turner R."/>
            <person name="Yooseph S."/>
            <person name="Lu F."/>
            <person name="Nusskern D.R."/>
            <person name="Shue B.C."/>
            <person name="Zheng X.H."/>
            <person name="Zhong F."/>
            <person name="Delcher A.L."/>
            <person name="Huson D.H."/>
            <person name="Kravitz S.A."/>
            <person name="Mouchard L."/>
            <person name="Reinert K."/>
            <person name="Remington K.A."/>
            <person name="Clark A.G."/>
            <person name="Waterman M.S."/>
            <person name="Eichler E.E."/>
            <person name="Adams M.D."/>
            <person name="Hunkapiller M.W."/>
            <person name="Myers E.W."/>
            <person name="Venter J.C."/>
        </authorList>
    </citation>
    <scope>NUCLEOTIDE SEQUENCE [LARGE SCALE GENOMIC DNA]</scope>
</reference>
<reference key="9">
    <citation type="journal article" date="2004" name="Genome Res.">
        <title>The status, quality, and expansion of the NIH full-length cDNA project: the Mammalian Gene Collection (MGC).</title>
        <authorList>
            <consortium name="The MGC Project Team"/>
        </authorList>
    </citation>
    <scope>NUCLEOTIDE SEQUENCE [LARGE SCALE MRNA] (ISOFORM 5)</scope>
    <source>
        <tissue>Testis</tissue>
    </source>
</reference>
<reference key="10">
    <citation type="journal article" date="2002" name="Hum. Mol. Genet.">
        <title>Three proteins, MBNL, MBLL and MBXL, co-localize in vivo with nuclear foci of expanded-repeat transcripts in DM1 and DM2 cells.</title>
        <authorList>
            <person name="Fardaei M."/>
            <person name="Rogers M.T."/>
            <person name="Thorpe H.M."/>
            <person name="Larkin K."/>
            <person name="Hamshere M.G."/>
            <person name="Harper P.S."/>
            <person name="Brook J.D."/>
        </authorList>
    </citation>
    <scope>SUBCELLULAR LOCATION</scope>
    <scope>TISSUE SPECIFICITY</scope>
    <scope>POSSIBLE INVOLVEMENT IN DM1</scope>
</reference>
<reference key="11">
    <citation type="journal article" date="2004" name="EMBO J.">
        <title>Muscleblind proteins regulate alternative splicing.</title>
        <authorList>
            <person name="Ho T.H."/>
            <person name="Charlet-B N."/>
            <person name="Poulos M.G."/>
            <person name="Singh G."/>
            <person name="Swanson M.S."/>
            <person name="Cooper T.A."/>
        </authorList>
    </citation>
    <scope>FUNCTION</scope>
    <scope>RNA-BINDING</scope>
</reference>
<reference key="12">
    <citation type="journal article" date="2006" name="EMBO J.">
        <title>Interaction of muscleblind, CUG-BP1 and hnRNP H proteins in DM1-associated aberrant IR splicing.</title>
        <authorList>
            <person name="Paul S."/>
            <person name="Dansithong W."/>
            <person name="Kim D."/>
            <person name="Rossi J."/>
            <person name="Webster N.J."/>
            <person name="Comai L."/>
            <person name="Reddy S."/>
        </authorList>
    </citation>
    <scope>FUNCTION</scope>
    <scope>INTERACTION WITH HNRNPH1</scope>
    <scope>RNA-BINDING</scope>
</reference>
<reference key="13">
    <citation type="journal article" date="2008" name="J. Neurosci. Res.">
        <title>MBNL1 associates with YB-1 in cytoplasmic stress granules.</title>
        <authorList>
            <person name="Onishi H."/>
            <person name="Kino Y."/>
            <person name="Morita T."/>
            <person name="Futai E."/>
            <person name="Sasagawa N."/>
            <person name="Ishiura S."/>
        </authorList>
    </citation>
    <scope>FUNCTION</scope>
    <scope>INTERACTION WITH DDX1 AND YBX1</scope>
    <scope>SUBCELLULAR LOCATION</scope>
    <scope>IDENTIFICATION BY MASS SPECTROMETRY</scope>
</reference>
<reference key="14">
    <citation type="journal article" date="2009" name="Proc. Natl. Acad. Sci. U.S.A.">
        <title>The protein factors MBNL1 and U2AF65 bind alternative RNA structures to regulate splicing.</title>
        <authorList>
            <person name="Warf M.B."/>
            <person name="Diegel J.V."/>
            <person name="von Hippel P.H."/>
            <person name="Berglund J.A."/>
        </authorList>
    </citation>
    <scope>FUNCTION</scope>
    <scope>RNA-BINDING</scope>
</reference>
<reference key="15">
    <citation type="journal article" date="2011" name="BMC Syst. Biol.">
        <title>Initial characterization of the human central proteome.</title>
        <authorList>
            <person name="Burkard T.R."/>
            <person name="Planyavsky M."/>
            <person name="Kaupe I."/>
            <person name="Breitwieser F.P."/>
            <person name="Buerckstuemmer T."/>
            <person name="Bennett K.L."/>
            <person name="Superti-Furga G."/>
            <person name="Colinge J."/>
        </authorList>
    </citation>
    <scope>IDENTIFICATION BY MASS SPECTROMETRY [LARGE SCALE ANALYSIS]</scope>
</reference>
<reference key="16">
    <citation type="journal article" date="2013" name="J. Proteome Res.">
        <title>Toward a comprehensive characterization of a human cancer cell phosphoproteome.</title>
        <authorList>
            <person name="Zhou H."/>
            <person name="Di Palma S."/>
            <person name="Preisinger C."/>
            <person name="Peng M."/>
            <person name="Polat A.N."/>
            <person name="Heck A.J."/>
            <person name="Mohammed S."/>
        </authorList>
    </citation>
    <scope>PHOSPHORYLATION [LARGE SCALE ANALYSIS] AT THR-6</scope>
    <scope>IDENTIFICATION BY MASS SPECTROMETRY [LARGE SCALE ANALYSIS]</scope>
    <source>
        <tissue>Erythroleukemia</tissue>
    </source>
</reference>
<reference key="17">
    <citation type="journal article" date="2015" name="J. Biol. Chem.">
        <title>RNA toxicity and missplicing in the common eye disease fuchs endothelial corneal dystrophy.</title>
        <authorList>
            <person name="Du J."/>
            <person name="Aleff R.A."/>
            <person name="Soragni E."/>
            <person name="Kalari K."/>
            <person name="Nie J."/>
            <person name="Tang X."/>
            <person name="Davila J."/>
            <person name="Kocher J.P."/>
            <person name="Patel S.V."/>
            <person name="Gottesfeld J.M."/>
            <person name="Baratz K.H."/>
            <person name="Wieben E.D."/>
        </authorList>
    </citation>
    <scope>INVOLVEMENT IN FECD3</scope>
</reference>
<reference key="18">
    <citation type="journal article" date="2023" name="Nucleic Acids Res.">
        <title>Cell-type specific regulator RBPMS switches alternative splicing via higher-order oligomerization and heterotypic interactions with other splicing regulators.</title>
        <authorList>
            <person name="Yang Y."/>
            <person name="Lee G.C."/>
            <person name="Nakagaki-Silva E."/>
            <person name="Huang Y."/>
            <person name="Peacey M."/>
            <person name="Partridge R."/>
            <person name="Gooding C."/>
            <person name="Smith C.W.J."/>
        </authorList>
    </citation>
    <scope>FUNCTION</scope>
    <scope>INTERACTION WITH RBPMS</scope>
</reference>
<reference key="19">
    <citation type="journal article" date="2008" name="Nat. Struct. Mol. Biol.">
        <title>Structural insights into RNA recognition by the alternative-splicing regulator muscleblind-like MBNL1.</title>
        <authorList>
            <person name="Teplova M."/>
            <person name="Patel D.J."/>
        </authorList>
    </citation>
    <scope>X-RAY CRYSTALLOGRAPHY (1.50 ANGSTROMS) OF 9-90 IN COMPLEX WITH ZINC IONS AND 178-246 IN COMPLEX WITH ZINC IONS AND RNA</scope>
    <scope>RNA-BINDING</scope>
</reference>
<reference key="20">
    <citation type="journal article" date="2016" name="Eur. J. Hum. Genet.">
        <title>Identification of variants in MBNL1 in patients with a myotonic dystrophy-like phenotype.</title>
        <authorList>
            <person name="Larsen M."/>
            <person name="Kress W."/>
            <person name="Schoser B."/>
            <person name="Hehr U."/>
            <person name="Mueller C.R."/>
            <person name="Rost S."/>
        </authorList>
    </citation>
    <scope>VARIANTS DM1 MET-32; 171-ALA--ALA-173 DEL AND SER-338</scope>
</reference>
<keyword id="KW-0002">3D-structure</keyword>
<keyword id="KW-0025">Alternative splicing</keyword>
<keyword id="KW-1212">Corneal dystrophy</keyword>
<keyword id="KW-0963">Cytoplasm</keyword>
<keyword id="KW-0225">Disease variant</keyword>
<keyword id="KW-0479">Metal-binding</keyword>
<keyword id="KW-0507">mRNA processing</keyword>
<keyword id="KW-0508">mRNA splicing</keyword>
<keyword id="KW-0539">Nucleus</keyword>
<keyword id="KW-0597">Phosphoprotein</keyword>
<keyword id="KW-1267">Proteomics identification</keyword>
<keyword id="KW-1185">Reference proteome</keyword>
<keyword id="KW-0677">Repeat</keyword>
<keyword id="KW-0694">RNA-binding</keyword>
<keyword id="KW-0862">Zinc</keyword>
<keyword id="KW-0863">Zinc-finger</keyword>
<feature type="chain" id="PRO_0000089178" description="Muscleblind-like protein 1">
    <location>
        <begin position="1"/>
        <end position="388"/>
    </location>
</feature>
<feature type="zinc finger region" description="C3H1-type 1" evidence="2">
    <location>
        <begin position="13"/>
        <end position="41"/>
    </location>
</feature>
<feature type="zinc finger region" description="C3H1-type 2" evidence="2">
    <location>
        <begin position="47"/>
        <end position="73"/>
    </location>
</feature>
<feature type="zinc finger region" description="C3H1-type 3" evidence="2">
    <location>
        <begin position="179"/>
        <end position="207"/>
    </location>
</feature>
<feature type="zinc finger region" description="C3H1-type 4" evidence="2">
    <location>
        <begin position="215"/>
        <end position="241"/>
    </location>
</feature>
<feature type="modified residue" description="Phosphothreonine" evidence="21">
    <location>
        <position position="6"/>
    </location>
</feature>
<feature type="splice variant" id="VSP_006429" description="In isoform 3 and isoform 4." evidence="14">
    <location>
        <begin position="116"/>
        <end position="183"/>
    </location>
</feature>
<feature type="splice variant" id="VSP_044903" description="In isoform 7." evidence="19">
    <original>TQSAVKSLKRPLEATFDLGIPQAVLPPLPKRPALEKTNGATAVFNTGIFQYQQALANMQLQQHTAFLPPVPMVHGATPATVSAATTSATSVPFAATATANQ</original>
    <variation>FPWCTVLRQPLCPQQQHLPQVFPSLQQPQPTSPILDASTLLGATSCPAAAGKM</variation>
    <location>
        <begin position="270"/>
        <end position="370"/>
    </location>
</feature>
<feature type="splice variant" id="VSP_006430" description="In isoform 2, isoform 3, isoform 4, isoform 5 and isoform 6." evidence="14 15 16 17 18 19">
    <location>
        <begin position="270"/>
        <end position="287"/>
    </location>
</feature>
<feature type="splice variant" id="VSP_043799" description="In isoform 4, isoform 5 and isoform 6." evidence="14 15 16 18 19">
    <original>P</original>
    <variation>PGSILCMTPATSV</variation>
    <location>
        <position position="338"/>
    </location>
</feature>
<feature type="splice variant" id="VSP_043800" description="In isoform 6." evidence="19">
    <original>VPMVHGATPATVSAATTSATSVPFAATATANQIPIISAEHLTSHKYVTQM</original>
    <variation>DTHNICRTSD</variation>
    <location>
        <begin position="339"/>
        <end position="388"/>
    </location>
</feature>
<feature type="sequence variant" id="VAR_076508" description="In DM1; uncertain significance; dbSNP:rs185894411." evidence="12">
    <original>T</original>
    <variation>M</variation>
    <location>
        <position position="32"/>
    </location>
</feature>
<feature type="sequence variant" id="VAR_076509" description="In DM1; uncertain significance." evidence="12">
    <location>
        <begin position="171"/>
        <end position="173"/>
    </location>
</feature>
<feature type="sequence variant" id="VAR_076510" description="In DM1; uncertain significance." evidence="12">
    <original>P</original>
    <variation>S</variation>
    <location>
        <position position="338"/>
    </location>
</feature>
<feature type="turn" evidence="25">
    <location>
        <begin position="2"/>
        <end position="5"/>
    </location>
</feature>
<feature type="helix" evidence="22">
    <location>
        <begin position="12"/>
        <end position="14"/>
    </location>
</feature>
<feature type="strand" evidence="22">
    <location>
        <begin position="15"/>
        <end position="18"/>
    </location>
</feature>
<feature type="helix" evidence="22">
    <location>
        <begin position="22"/>
        <end position="24"/>
    </location>
</feature>
<feature type="turn" evidence="22">
    <location>
        <begin position="31"/>
        <end position="33"/>
    </location>
</feature>
<feature type="strand" evidence="22">
    <location>
        <begin position="35"/>
        <end position="37"/>
    </location>
</feature>
<feature type="strand" evidence="22">
    <location>
        <begin position="49"/>
        <end position="51"/>
    </location>
</feature>
<feature type="helix" evidence="22">
    <location>
        <begin position="54"/>
        <end position="57"/>
    </location>
</feature>
<feature type="strand" evidence="25">
    <location>
        <begin position="67"/>
        <end position="69"/>
    </location>
</feature>
<feature type="helix" evidence="22">
    <location>
        <begin position="73"/>
        <end position="82"/>
    </location>
</feature>
<feature type="turn" evidence="27">
    <location>
        <begin position="89"/>
        <end position="91"/>
    </location>
</feature>
<feature type="strand" evidence="26">
    <location>
        <begin position="176"/>
        <end position="178"/>
    </location>
</feature>
<feature type="strand" evidence="23">
    <location>
        <begin position="181"/>
        <end position="184"/>
    </location>
</feature>
<feature type="helix" evidence="23">
    <location>
        <begin position="186"/>
        <end position="189"/>
    </location>
</feature>
<feature type="turn" evidence="23">
    <location>
        <begin position="197"/>
        <end position="199"/>
    </location>
</feature>
<feature type="strand" evidence="23">
    <location>
        <begin position="201"/>
        <end position="203"/>
    </location>
</feature>
<feature type="helix" evidence="26">
    <location>
        <begin position="208"/>
        <end position="210"/>
    </location>
</feature>
<feature type="turn" evidence="23">
    <location>
        <begin position="213"/>
        <end position="216"/>
    </location>
</feature>
<feature type="strand" evidence="23">
    <location>
        <begin position="217"/>
        <end position="220"/>
    </location>
</feature>
<feature type="helix" evidence="23">
    <location>
        <begin position="222"/>
        <end position="225"/>
    </location>
</feature>
<feature type="strand" evidence="24">
    <location>
        <begin position="235"/>
        <end position="237"/>
    </location>
</feature>
<feature type="helix" evidence="23">
    <location>
        <begin position="241"/>
        <end position="244"/>
    </location>
</feature>
<feature type="turn" evidence="26">
    <location>
        <begin position="252"/>
        <end position="254"/>
    </location>
</feature>
<feature type="sequence conflict" description="In Ref. 6; AAP30726." evidence="20" ref="6">
    <original>A</original>
    <variation>AA</variation>
    <location sequence="Q9NR56-7">
        <position position="317"/>
    </location>
</feature>
<organism>
    <name type="scientific">Homo sapiens</name>
    <name type="common">Human</name>
    <dbReference type="NCBI Taxonomy" id="9606"/>
    <lineage>
        <taxon>Eukaryota</taxon>
        <taxon>Metazoa</taxon>
        <taxon>Chordata</taxon>
        <taxon>Craniata</taxon>
        <taxon>Vertebrata</taxon>
        <taxon>Euteleostomi</taxon>
        <taxon>Mammalia</taxon>
        <taxon>Eutheria</taxon>
        <taxon>Euarchontoglires</taxon>
        <taxon>Primates</taxon>
        <taxon>Haplorrhini</taxon>
        <taxon>Catarrhini</taxon>
        <taxon>Hominidae</taxon>
        <taxon>Homo</taxon>
    </lineage>
</organism>
<name>MBNL1_HUMAN</name>
<accession>Q9NR56</accession>
<accession>E9PBW7</accession>
<accession>O43311</accession>
<accession>O43797</accession>
<accession>Q86UV8</accession>
<accession>Q86UV9</accession>
<accession>Q96P92</accession>
<accession>Q96RE3</accession>
<comment type="function">
    <text evidence="1 3 6 7 8 10 13">Mediates pre-mRNA alternative splicing regulation. Acts either as activator or repressor of splicing on specific pre-mRNA targets. Inhibits cardiac troponin-T (TNNT2) pre-mRNA exon inclusion but induces insulin receptor (IR) pre-mRNA exon inclusion in muscle. Antagonizes the alternative splicing activity pattern of CELF proteins. Regulates the TNNT2 exon 5 skipping through competition with U2AF2. Inhibits the formation of the spliceosome A complex on intron 4 of TNNT2 pre-mRNA. Binds to the stem-loop structure within the polypyrimidine tract of TNNT2 intron 4 during spliceosome assembly. Binds to the 5'-YGCU(U/G)Y-3'consensus sequence. Binds to the IR RNA. Binds to expanded CUG repeat RNA, which folds into a hairpin structure containing GC base pairs and bulged, unpaired U residues. Together with RNA binding proteins RBPMS and RBFOX2, activates vascular smooth muscle cells alternative splicing events (PubMed:37548402). Regulates NCOR2 alternative splicing (By similarity).</text>
</comment>
<comment type="subunit">
    <text evidence="7 8 9 13">Interacts with DDX1 and YBX1. Interacts with HNRNPH1; the interaction in RNA-independent. Interacts with RBPMS; the interaction allows cooperative assembly of RNA-bound stable cell-specific alternative splicing regulatory complexes (PubMed:37548402).</text>
</comment>
<comment type="interaction">
    <interactant intactId="EBI-2805004">
        <id>Q9NR56</id>
    </interactant>
    <interactant intactId="EBI-7875264">
        <id>O75553</id>
        <label>DAB1</label>
    </interactant>
    <organismsDiffer>false</organismsDiffer>
    <experiments>4</experiments>
</comment>
<comment type="interaction">
    <interactant intactId="EBI-2805004">
        <id>Q9NR56</id>
    </interactant>
    <interactant intactId="EBI-351590">
        <id>P31943</id>
        <label>HNRNPH1</label>
    </interactant>
    <organismsDiffer>false</organismsDiffer>
    <experiments>2</experiments>
</comment>
<comment type="interaction">
    <interactant intactId="EBI-25978262">
        <id>Q9NR56-5</id>
    </interactant>
    <interactant intactId="EBI-930964">
        <id>P54253</id>
        <label>ATXN1</label>
    </interactant>
    <organismsDiffer>false</organismsDiffer>
    <experiments>6</experiments>
</comment>
<comment type="subcellular location">
    <subcellularLocation>
        <location evidence="3 4 5">Nucleus</location>
    </subcellularLocation>
    <subcellularLocation>
        <location evidence="8">Cytoplasm</location>
    </subcellularLocation>
    <subcellularLocation>
        <location evidence="8">Cytoplasmic granule</location>
    </subcellularLocation>
    <text>Localized with DDX1, TIAL1 and YBX1 in stress granules upon stress (PubMed:18335541). Localized in the cytoplasm of multinucleated myotubes (PubMed:18335541). Colocalizes with nuclear foci of retained expanded-repeat transcripts in myotubes from patients affected by myotonic dystrophy (PubMed:10970838, PubMed:11590133, PubMed:11929853).</text>
</comment>
<comment type="alternative products">
    <event type="alternative splicing"/>
    <isoform>
        <id>Q9NR56-1</id>
        <name>1</name>
        <name>EXP42</name>
        <sequence type="displayed"/>
    </isoform>
    <isoform>
        <id>Q9NR56-2</id>
        <name>2</name>
        <name>EXP40</name>
        <sequence type="described" ref="VSP_006430"/>
    </isoform>
    <isoform>
        <id>Q9NR56-3</id>
        <name>3</name>
        <name>EXP35</name>
        <sequence type="described" ref="VSP_006429 VSP_006430"/>
    </isoform>
    <isoform>
        <id>Q9NR56-4</id>
        <name>4</name>
        <name>EXP36</name>
        <sequence type="described" ref="VSP_006429 VSP_006430 VSP_043799"/>
    </isoform>
    <isoform>
        <id>Q9NR56-5</id>
        <name>5</name>
        <name>EXP41</name>
        <sequence type="described" ref="VSP_006430 VSP_043799"/>
    </isoform>
    <isoform>
        <id>Q9NR56-6</id>
        <name>6</name>
        <name>EXP41S</name>
        <sequence type="described" ref="VSP_006430 VSP_043799 VSP_043800"/>
    </isoform>
    <isoform>
        <id>Q9NR56-7</id>
        <name>7</name>
        <sequence type="described" ref="VSP_044903"/>
    </isoform>
</comment>
<comment type="tissue specificity">
    <text evidence="3 5">Highly expressed in cardiac, skeletal muscle and during myoblast differentiation. Weakly expressed in other tissues (at protein level). Expressed in heart, brain, placenta, lung, liver, skeletal muscle, kidney and pancreas.</text>
</comment>
<comment type="disease" evidence="5 12">
    <disease id="DI-02023">
        <name>Dystrophia myotonica 1</name>
        <acronym>DM1</acronym>
        <description>A muscular disorder characterized by myotonia, muscle wasting in the distal extremities, cataract, hypogonadism, defective endocrine functions, male baldness and cardiac arrhythmias.</description>
        <dbReference type="MIM" id="160900"/>
    </disease>
    <text>The protein represented in this entry may be involved in disease pathogenesis. In muscle cells from patients, MBNL1 is sequestered by DMPK RNAs containing pathogenic CUG triplet repeat expansions. MBNL1 binding is proportional to repeat length consistent with the direct correlation between the length of repeat expansion and disease severity.</text>
</comment>
<comment type="disease" evidence="11">
    <disease id="DI-04548">
        <name>Corneal dystrophy, Fuchs endothelial, 3</name>
        <acronym>FECD3</acronym>
        <description>A late-onset form of Fuchs endothelial corneal dystrophy, a disease caused by loss of endothelium of the central cornea. It is characterized by focal wart-like guttata that arise from Descemet membrane and develop in the central cornea, epithelial blisters, reduced vision and pain. Descemet membrane is thickened by abnormal collagenous deposition.</description>
        <dbReference type="MIM" id="613267"/>
    </disease>
    <text evidence="11">The protein represented in this entry is involved in disease pathogenesis. In corneal endothelial cells from patients, MBNL1 is sequestered by TCF4 RNAs containing pathogenic CUG triplet repeat expansions. This results in missplicing of essential MBNL1-regulated mRNAs.</text>
</comment>
<comment type="similarity">
    <text evidence="20">Belongs to the muscleblind family.</text>
</comment>
<comment type="sequence caution" evidence="20">
    <conflict type="erroneous initiation">
        <sequence resource="EMBL-CDS" id="BAA24858"/>
    </conflict>
    <text>Extended N-terminus.</text>
</comment>
<evidence type="ECO:0000250" key="1">
    <source>
        <dbReference type="UniProtKB" id="A0A8I6B1J2"/>
    </source>
</evidence>
<evidence type="ECO:0000255" key="2">
    <source>
        <dbReference type="PROSITE-ProRule" id="PRU00723"/>
    </source>
</evidence>
<evidence type="ECO:0000269" key="3">
    <source>
    </source>
</evidence>
<evidence type="ECO:0000269" key="4">
    <source>
    </source>
</evidence>
<evidence type="ECO:0000269" key="5">
    <source>
    </source>
</evidence>
<evidence type="ECO:0000269" key="6">
    <source>
    </source>
</evidence>
<evidence type="ECO:0000269" key="7">
    <source>
    </source>
</evidence>
<evidence type="ECO:0000269" key="8">
    <source>
    </source>
</evidence>
<evidence type="ECO:0000269" key="9">
    <source>
    </source>
</evidence>
<evidence type="ECO:0000269" key="10">
    <source>
    </source>
</evidence>
<evidence type="ECO:0000269" key="11">
    <source>
    </source>
</evidence>
<evidence type="ECO:0000269" key="12">
    <source>
    </source>
</evidence>
<evidence type="ECO:0000269" key="13">
    <source>
    </source>
</evidence>
<evidence type="ECO:0000303" key="14">
    <source>
    </source>
</evidence>
<evidence type="ECO:0000303" key="15">
    <source>
    </source>
</evidence>
<evidence type="ECO:0000303" key="16">
    <source>
    </source>
</evidence>
<evidence type="ECO:0000303" key="17">
    <source>
    </source>
</evidence>
<evidence type="ECO:0000303" key="18">
    <source ref="5"/>
</evidence>
<evidence type="ECO:0000303" key="19">
    <source ref="6"/>
</evidence>
<evidence type="ECO:0000305" key="20"/>
<evidence type="ECO:0007744" key="21">
    <source>
    </source>
</evidence>
<evidence type="ECO:0007829" key="22">
    <source>
        <dbReference type="PDB" id="3D2N"/>
    </source>
</evidence>
<evidence type="ECO:0007829" key="23">
    <source>
        <dbReference type="PDB" id="3D2Q"/>
    </source>
</evidence>
<evidence type="ECO:0007829" key="24">
    <source>
        <dbReference type="PDB" id="3D2S"/>
    </source>
</evidence>
<evidence type="ECO:0007829" key="25">
    <source>
        <dbReference type="PDB" id="5U6H"/>
    </source>
</evidence>
<evidence type="ECO:0007829" key="26">
    <source>
        <dbReference type="PDB" id="5U6L"/>
    </source>
</evidence>
<evidence type="ECO:0007829" key="27">
    <source>
        <dbReference type="PDB" id="5U9B"/>
    </source>
</evidence>
<dbReference type="EMBL" id="Y13829">
    <property type="protein sequence ID" value="CAA74155.1"/>
    <property type="molecule type" value="mRNA"/>
</dbReference>
<dbReference type="EMBL" id="AB007888">
    <property type="protein sequence ID" value="BAA24858.2"/>
    <property type="status" value="ALT_INIT"/>
    <property type="molecule type" value="mRNA"/>
</dbReference>
<dbReference type="EMBL" id="AF255334">
    <property type="protein sequence ID" value="AAF76138.1"/>
    <property type="molecule type" value="mRNA"/>
</dbReference>
<dbReference type="EMBL" id="AF395876">
    <property type="protein sequence ID" value="AAK82889.1"/>
    <property type="molecule type" value="mRNA"/>
</dbReference>
<dbReference type="EMBL" id="AF401998">
    <property type="protein sequence ID" value="AAK94915.1"/>
    <property type="molecule type" value="mRNA"/>
</dbReference>
<dbReference type="EMBL" id="AJ308400">
    <property type="protein sequence ID" value="CAC83727.1"/>
    <property type="molecule type" value="mRNA"/>
</dbReference>
<dbReference type="EMBL" id="AF497718">
    <property type="protein sequence ID" value="AAP30726.1"/>
    <property type="molecule type" value="mRNA"/>
</dbReference>
<dbReference type="EMBL" id="AF497719">
    <property type="protein sequence ID" value="AAP30727.1"/>
    <property type="molecule type" value="mRNA"/>
</dbReference>
<dbReference type="EMBL" id="AC026347">
    <property type="status" value="NOT_ANNOTATED_CDS"/>
    <property type="molecule type" value="Genomic_DNA"/>
</dbReference>
<dbReference type="EMBL" id="AC106722">
    <property type="status" value="NOT_ANNOTATED_CDS"/>
    <property type="molecule type" value="Genomic_DNA"/>
</dbReference>
<dbReference type="EMBL" id="CH471052">
    <property type="protein sequence ID" value="EAW78775.1"/>
    <property type="molecule type" value="Genomic_DNA"/>
</dbReference>
<dbReference type="EMBL" id="BC043493">
    <property type="protein sequence ID" value="AAH43493.1"/>
    <property type="molecule type" value="mRNA"/>
</dbReference>
<dbReference type="CCDS" id="CCDS3163.1">
    <molecule id="Q9NR56-5"/>
</dbReference>
<dbReference type="CCDS" id="CCDS3164.1">
    <molecule id="Q9NR56-2"/>
</dbReference>
<dbReference type="CCDS" id="CCDS3165.1">
    <molecule id="Q9NR56-1"/>
</dbReference>
<dbReference type="CCDS" id="CCDS3166.1">
    <molecule id="Q9NR56-4"/>
</dbReference>
<dbReference type="CCDS" id="CCDS3167.1">
    <molecule id="Q9NR56-7"/>
</dbReference>
<dbReference type="CCDS" id="CCDS3168.1">
    <molecule id="Q9NR56-6"/>
</dbReference>
<dbReference type="CCDS" id="CCDS54656.1">
    <molecule id="Q9NR56-3"/>
</dbReference>
<dbReference type="RefSeq" id="NP_001300986.1">
    <property type="nucleotide sequence ID" value="NM_001314057.1"/>
</dbReference>
<dbReference type="RefSeq" id="NP_001363753.1">
    <molecule id="Q9NR56-1"/>
    <property type="nucleotide sequence ID" value="NM_001376824.1"/>
</dbReference>
<dbReference type="RefSeq" id="NP_001363754.1">
    <molecule id="Q9NR56-1"/>
    <property type="nucleotide sequence ID" value="NM_001376825.1"/>
</dbReference>
<dbReference type="RefSeq" id="NP_001363755.1">
    <molecule id="Q9NR56-5"/>
    <property type="nucleotide sequence ID" value="NM_001376826.1"/>
</dbReference>
<dbReference type="RefSeq" id="NP_001363756.1">
    <molecule id="Q9NR56-5"/>
    <property type="nucleotide sequence ID" value="NM_001376827.1"/>
</dbReference>
<dbReference type="RefSeq" id="NP_001363757.1">
    <molecule id="Q9NR56-5"/>
    <property type="nucleotide sequence ID" value="NM_001376828.1"/>
</dbReference>
<dbReference type="RefSeq" id="NP_001363758.1">
    <molecule id="Q9NR56-5"/>
    <property type="nucleotide sequence ID" value="NM_001376829.1"/>
</dbReference>
<dbReference type="RefSeq" id="NP_001363759.1">
    <molecule id="Q9NR56-2"/>
    <property type="nucleotide sequence ID" value="NM_001376830.1"/>
</dbReference>
<dbReference type="RefSeq" id="NP_001363760.1">
    <molecule id="Q9NR56-2"/>
    <property type="nucleotide sequence ID" value="NM_001376831.1"/>
</dbReference>
<dbReference type="RefSeq" id="NP_001363763.1">
    <molecule id="Q9NR56-6"/>
    <property type="nucleotide sequence ID" value="NM_001376834.1"/>
</dbReference>
<dbReference type="RefSeq" id="NP_001374715.1">
    <molecule id="Q9NR56-5"/>
    <property type="nucleotide sequence ID" value="NM_001387786.1"/>
</dbReference>
<dbReference type="RefSeq" id="NP_001374721.1">
    <molecule id="Q9NR56-6"/>
    <property type="nucleotide sequence ID" value="NM_001387792.1"/>
</dbReference>
<dbReference type="RefSeq" id="NP_001374722.1">
    <molecule id="Q9NR56-6"/>
    <property type="nucleotide sequence ID" value="NM_001387793.1"/>
</dbReference>
<dbReference type="RefSeq" id="NP_001374730.1">
    <molecule id="Q9NR56-4"/>
    <property type="nucleotide sequence ID" value="NM_001387801.1"/>
</dbReference>
<dbReference type="RefSeq" id="NP_001374731.1">
    <molecule id="Q9NR56-4"/>
    <property type="nucleotide sequence ID" value="NM_001387802.1"/>
</dbReference>
<dbReference type="RefSeq" id="NP_066368.2">
    <molecule id="Q9NR56-5"/>
    <property type="nucleotide sequence ID" value="NM_021038.4"/>
</dbReference>
<dbReference type="RefSeq" id="NP_997175.1">
    <molecule id="Q9NR56-2"/>
    <property type="nucleotide sequence ID" value="NM_207292.3"/>
</dbReference>
<dbReference type="RefSeq" id="NP_997176.1">
    <molecule id="Q9NR56-1"/>
    <property type="nucleotide sequence ID" value="NM_207293.2"/>
</dbReference>
<dbReference type="RefSeq" id="NP_997177.1">
    <molecule id="Q9NR56-3"/>
    <property type="nucleotide sequence ID" value="NM_207294.2"/>
</dbReference>
<dbReference type="RefSeq" id="NP_997178.1">
    <molecule id="Q9NR56-4"/>
    <property type="nucleotide sequence ID" value="NM_207295.2"/>
</dbReference>
<dbReference type="RefSeq" id="NP_997179.1">
    <molecule id="Q9NR56-7"/>
    <property type="nucleotide sequence ID" value="NM_207296.2"/>
</dbReference>
<dbReference type="RefSeq" id="NP_997180.1">
    <molecule id="Q9NR56-6"/>
    <property type="nucleotide sequence ID" value="NM_207297.2"/>
</dbReference>
<dbReference type="RefSeq" id="XP_005247523.1">
    <property type="nucleotide sequence ID" value="XM_005247466.4"/>
</dbReference>
<dbReference type="RefSeq" id="XP_005247528.1">
    <property type="nucleotide sequence ID" value="XM_005247471.4"/>
</dbReference>
<dbReference type="RefSeq" id="XP_011511149.1">
    <property type="nucleotide sequence ID" value="XM_011512847.2"/>
</dbReference>
<dbReference type="RefSeq" id="XP_011511151.1">
    <property type="nucleotide sequence ID" value="XM_011512849.2"/>
</dbReference>
<dbReference type="RefSeq" id="XP_016861914.1">
    <property type="nucleotide sequence ID" value="XM_017006425.1"/>
</dbReference>
<dbReference type="RefSeq" id="XP_016861915.1">
    <property type="nucleotide sequence ID" value="XM_017006426.1"/>
</dbReference>
<dbReference type="RefSeq" id="XP_016861916.1">
    <property type="nucleotide sequence ID" value="XM_017006427.1"/>
</dbReference>
<dbReference type="RefSeq" id="XP_016861917.1">
    <property type="nucleotide sequence ID" value="XM_017006428.1"/>
</dbReference>
<dbReference type="RefSeq" id="XP_016861918.1">
    <property type="nucleotide sequence ID" value="XM_017006429.1"/>
</dbReference>
<dbReference type="RefSeq" id="XP_016861919.1">
    <property type="nucleotide sequence ID" value="XM_017006430.1"/>
</dbReference>
<dbReference type="RefSeq" id="XP_016861920.1">
    <property type="nucleotide sequence ID" value="XM_017006431.1"/>
</dbReference>
<dbReference type="RefSeq" id="XP_016861925.1">
    <property type="nucleotide sequence ID" value="XM_017006436.1"/>
</dbReference>
<dbReference type="RefSeq" id="XP_047304091.1">
    <molecule id="Q9NR56-1"/>
    <property type="nucleotide sequence ID" value="XM_047448135.1"/>
</dbReference>
<dbReference type="RefSeq" id="XP_047304092.1">
    <molecule id="Q9NR56-2"/>
    <property type="nucleotide sequence ID" value="XM_047448136.1"/>
</dbReference>
<dbReference type="RefSeq" id="XP_047304098.1">
    <molecule id="Q9NR56-4"/>
    <property type="nucleotide sequence ID" value="XM_047448142.1"/>
</dbReference>
<dbReference type="RefSeq" id="XP_047304100.1">
    <molecule id="Q9NR56-3"/>
    <property type="nucleotide sequence ID" value="XM_047448144.1"/>
</dbReference>
<dbReference type="RefSeq" id="XP_054202520.1">
    <molecule id="Q9NR56-1"/>
    <property type="nucleotide sequence ID" value="XM_054346545.1"/>
</dbReference>
<dbReference type="RefSeq" id="XP_054202521.1">
    <molecule id="Q9NR56-2"/>
    <property type="nucleotide sequence ID" value="XM_054346546.1"/>
</dbReference>
<dbReference type="RefSeq" id="XP_054202527.1">
    <molecule id="Q9NR56-4"/>
    <property type="nucleotide sequence ID" value="XM_054346552.1"/>
</dbReference>
<dbReference type="RefSeq" id="XP_054202529.1">
    <molecule id="Q9NR56-3"/>
    <property type="nucleotide sequence ID" value="XM_054346554.1"/>
</dbReference>
<dbReference type="PDB" id="3D2N">
    <property type="method" value="X-ray"/>
    <property type="resolution" value="2.70 A"/>
    <property type="chains" value="A=9-90"/>
</dbReference>
<dbReference type="PDB" id="3D2Q">
    <property type="method" value="X-ray"/>
    <property type="resolution" value="1.50 A"/>
    <property type="chains" value="A/B/C/D=178-246"/>
</dbReference>
<dbReference type="PDB" id="3D2S">
    <property type="method" value="X-ray"/>
    <property type="resolution" value="1.70 A"/>
    <property type="chains" value="A/B/C/D=178-246"/>
</dbReference>
<dbReference type="PDB" id="5U6H">
    <property type="method" value="NMR"/>
    <property type="chains" value="A=1-92"/>
</dbReference>
<dbReference type="PDB" id="5U6L">
    <property type="method" value="NMR"/>
    <property type="chains" value="A=173-255"/>
</dbReference>
<dbReference type="PDB" id="5U9B">
    <property type="method" value="NMR"/>
    <property type="chains" value="A=1-92"/>
</dbReference>
<dbReference type="PDBsum" id="3D2N"/>
<dbReference type="PDBsum" id="3D2Q"/>
<dbReference type="PDBsum" id="3D2S"/>
<dbReference type="PDBsum" id="5U6H"/>
<dbReference type="PDBsum" id="5U6L"/>
<dbReference type="PDBsum" id="5U9B"/>
<dbReference type="SMR" id="Q9NR56"/>
<dbReference type="BioGRID" id="110324">
    <property type="interactions" value="301"/>
</dbReference>
<dbReference type="FunCoup" id="Q9NR56">
    <property type="interactions" value="2697"/>
</dbReference>
<dbReference type="IntAct" id="Q9NR56">
    <property type="interactions" value="215"/>
</dbReference>
<dbReference type="MINT" id="Q9NR56"/>
<dbReference type="STRING" id="9606.ENSP00000282486"/>
<dbReference type="BindingDB" id="Q9NR56"/>
<dbReference type="ChEMBL" id="CHEMBL1293317"/>
<dbReference type="GlyCosmos" id="Q9NR56">
    <property type="glycosylation" value="1 site, 1 glycan"/>
</dbReference>
<dbReference type="GlyGen" id="Q9NR56">
    <property type="glycosylation" value="1 site, 1 O-linked glycan (1 site)"/>
</dbReference>
<dbReference type="iPTMnet" id="Q9NR56"/>
<dbReference type="PhosphoSitePlus" id="Q9NR56"/>
<dbReference type="SwissPalm" id="Q9NR56"/>
<dbReference type="BioMuta" id="MBNL1"/>
<dbReference type="DMDM" id="17369313"/>
<dbReference type="jPOST" id="Q9NR56"/>
<dbReference type="MassIVE" id="Q9NR56"/>
<dbReference type="PaxDb" id="9606-ENSP00000282486"/>
<dbReference type="PeptideAtlas" id="Q9NR56"/>
<dbReference type="ProteomicsDB" id="19310"/>
<dbReference type="ProteomicsDB" id="82279">
    <molecule id="Q9NR56-1"/>
</dbReference>
<dbReference type="ProteomicsDB" id="82280">
    <molecule id="Q9NR56-2"/>
</dbReference>
<dbReference type="ProteomicsDB" id="82281">
    <molecule id="Q9NR56-3"/>
</dbReference>
<dbReference type="ProteomicsDB" id="82282">
    <molecule id="Q9NR56-4"/>
</dbReference>
<dbReference type="ProteomicsDB" id="82283">
    <molecule id="Q9NR56-5"/>
</dbReference>
<dbReference type="ProteomicsDB" id="82284">
    <molecule id="Q9NR56-6"/>
</dbReference>
<dbReference type="Pumba" id="Q9NR56"/>
<dbReference type="Antibodypedia" id="4292">
    <property type="antibodies" value="350 antibodies from 33 providers"/>
</dbReference>
<dbReference type="DNASU" id="4154"/>
<dbReference type="Ensembl" id="ENST00000282486.10">
    <molecule id="Q9NR56-1"/>
    <property type="protein sequence ID" value="ENSP00000282486.6"/>
    <property type="gene ID" value="ENSG00000152601.18"/>
</dbReference>
<dbReference type="Ensembl" id="ENST00000324196.9">
    <molecule id="Q9NR56-7"/>
    <property type="protein sequence ID" value="ENSP00000319374.5"/>
    <property type="gene ID" value="ENSG00000152601.18"/>
</dbReference>
<dbReference type="Ensembl" id="ENST00000324210.10">
    <molecule id="Q9NR56-5"/>
    <property type="protein sequence ID" value="ENSP00000319429.5"/>
    <property type="gene ID" value="ENSG00000152601.18"/>
</dbReference>
<dbReference type="Ensembl" id="ENST00000355460.6">
    <molecule id="Q9NR56-2"/>
    <property type="protein sequence ID" value="ENSP00000347637.2"/>
    <property type="gene ID" value="ENSG00000152601.18"/>
</dbReference>
<dbReference type="Ensembl" id="ENST00000357472.7">
    <molecule id="Q9NR56-6"/>
    <property type="protein sequence ID" value="ENSP00000350064.3"/>
    <property type="gene ID" value="ENSG00000152601.18"/>
</dbReference>
<dbReference type="Ensembl" id="ENST00000463374.5">
    <molecule id="Q9NR56-1"/>
    <property type="protein sequence ID" value="ENSP00000418108.1"/>
    <property type="gene ID" value="ENSG00000152601.18"/>
</dbReference>
<dbReference type="Ensembl" id="ENST00000465907.6">
    <molecule id="Q9NR56-4"/>
    <property type="protein sequence ID" value="ENSP00000417630.2"/>
    <property type="gene ID" value="ENSG00000152601.18"/>
</dbReference>
<dbReference type="Ensembl" id="ENST00000485509.5">
    <molecule id="Q9NR56-7"/>
    <property type="protein sequence ID" value="ENSP00000418876.1"/>
    <property type="gene ID" value="ENSG00000152601.18"/>
</dbReference>
<dbReference type="Ensembl" id="ENST00000485910.5">
    <molecule id="Q9NR56-3"/>
    <property type="protein sequence ID" value="ENSP00000418427.1"/>
    <property type="gene ID" value="ENSG00000152601.18"/>
</dbReference>
<dbReference type="Ensembl" id="ENST00000492948.5">
    <molecule id="Q9NR56-6"/>
    <property type="protein sequence ID" value="ENSP00000420103.1"/>
    <property type="gene ID" value="ENSG00000152601.18"/>
</dbReference>
<dbReference type="Ensembl" id="ENST00000545754.5">
    <molecule id="Q9NR56-4"/>
    <property type="protein sequence ID" value="ENSP00000437491.1"/>
    <property type="gene ID" value="ENSG00000152601.18"/>
</dbReference>
<dbReference type="GeneID" id="4154"/>
<dbReference type="KEGG" id="hsa:4154"/>
<dbReference type="MANE-Select" id="ENST00000324210.10">
    <molecule id="Q9NR56-5"/>
    <property type="protein sequence ID" value="ENSP00000319429.5"/>
    <property type="RefSeq nucleotide sequence ID" value="NM_021038.5"/>
    <property type="RefSeq protein sequence ID" value="NP_066368.2"/>
</dbReference>
<dbReference type="UCSC" id="uc003ezh.4">
    <molecule id="Q9NR56-1"/>
    <property type="organism name" value="human"/>
</dbReference>
<dbReference type="AGR" id="HGNC:6923"/>
<dbReference type="CTD" id="4154"/>
<dbReference type="DisGeNET" id="4154"/>
<dbReference type="GeneCards" id="MBNL1"/>
<dbReference type="HGNC" id="HGNC:6923">
    <property type="gene designation" value="MBNL1"/>
</dbReference>
<dbReference type="HPA" id="ENSG00000152601">
    <property type="expression patterns" value="Low tissue specificity"/>
</dbReference>
<dbReference type="MIM" id="160900">
    <property type="type" value="phenotype"/>
</dbReference>
<dbReference type="MIM" id="606516">
    <property type="type" value="gene"/>
</dbReference>
<dbReference type="MIM" id="613267">
    <property type="type" value="phenotype"/>
</dbReference>
<dbReference type="neXtProt" id="NX_Q9NR56"/>
<dbReference type="OpenTargets" id="ENSG00000152601"/>
<dbReference type="PharmGKB" id="PA30666"/>
<dbReference type="VEuPathDB" id="HostDB:ENSG00000152601"/>
<dbReference type="eggNOG" id="KOG2494">
    <property type="taxonomic scope" value="Eukaryota"/>
</dbReference>
<dbReference type="GeneTree" id="ENSGT00950000182897"/>
<dbReference type="HOGENOM" id="CLU_053536_0_0_1"/>
<dbReference type="InParanoid" id="Q9NR56"/>
<dbReference type="OMA" id="ATSKVPM"/>
<dbReference type="OrthoDB" id="6285980at2759"/>
<dbReference type="PAN-GO" id="Q9NR56">
    <property type="GO annotations" value="4 GO annotations based on evolutionary models"/>
</dbReference>
<dbReference type="PhylomeDB" id="Q9NR56"/>
<dbReference type="TreeFam" id="TF321931"/>
<dbReference type="PathwayCommons" id="Q9NR56"/>
<dbReference type="SignaLink" id="Q9NR56"/>
<dbReference type="BioGRID-ORCS" id="4154">
    <property type="hits" value="91 hits in 1172 CRISPR screens"/>
</dbReference>
<dbReference type="CD-CODE" id="232F8A39">
    <property type="entry name" value="P-body"/>
</dbReference>
<dbReference type="CD-CODE" id="DEE660B4">
    <property type="entry name" value="Stress granule"/>
</dbReference>
<dbReference type="ChiTaRS" id="MBNL1">
    <property type="organism name" value="human"/>
</dbReference>
<dbReference type="EvolutionaryTrace" id="Q9NR56"/>
<dbReference type="GeneWiki" id="MBNL1"/>
<dbReference type="GenomeRNAi" id="4154"/>
<dbReference type="Pharos" id="Q9NR56">
    <property type="development level" value="Tbio"/>
</dbReference>
<dbReference type="PRO" id="PR:Q9NR56"/>
<dbReference type="Proteomes" id="UP000005640">
    <property type="component" value="Chromosome 3"/>
</dbReference>
<dbReference type="RNAct" id="Q9NR56">
    <property type="molecule type" value="protein"/>
</dbReference>
<dbReference type="Bgee" id="ENSG00000152601">
    <property type="expression patterns" value="Expressed in calcaneal tendon and 216 other cell types or tissues"/>
</dbReference>
<dbReference type="ExpressionAtlas" id="Q9NR56">
    <property type="expression patterns" value="baseline and differential"/>
</dbReference>
<dbReference type="GO" id="GO:0005737">
    <property type="term" value="C:cytoplasm"/>
    <property type="evidence" value="ECO:0000314"/>
    <property type="project" value="UniProtKB"/>
</dbReference>
<dbReference type="GO" id="GO:0010494">
    <property type="term" value="C:cytoplasmic stress granule"/>
    <property type="evidence" value="ECO:0000314"/>
    <property type="project" value="UniProtKB"/>
</dbReference>
<dbReference type="GO" id="GO:0005829">
    <property type="term" value="C:cytosol"/>
    <property type="evidence" value="ECO:0000314"/>
    <property type="project" value="HPA"/>
</dbReference>
<dbReference type="GO" id="GO:0005654">
    <property type="term" value="C:nucleoplasm"/>
    <property type="evidence" value="ECO:0000314"/>
    <property type="project" value="HPA"/>
</dbReference>
<dbReference type="GO" id="GO:0005634">
    <property type="term" value="C:nucleus"/>
    <property type="evidence" value="ECO:0000314"/>
    <property type="project" value="UniProtKB"/>
</dbReference>
<dbReference type="GO" id="GO:0003725">
    <property type="term" value="F:double-stranded RNA binding"/>
    <property type="evidence" value="ECO:0000314"/>
    <property type="project" value="UniProtKB"/>
</dbReference>
<dbReference type="GO" id="GO:0003723">
    <property type="term" value="F:RNA binding"/>
    <property type="evidence" value="ECO:0000314"/>
    <property type="project" value="UniProtKB"/>
</dbReference>
<dbReference type="GO" id="GO:0008270">
    <property type="term" value="F:zinc ion binding"/>
    <property type="evidence" value="ECO:0007669"/>
    <property type="project" value="UniProtKB-KW"/>
</dbReference>
<dbReference type="GO" id="GO:0030326">
    <property type="term" value="P:embryonic limb morphogenesis"/>
    <property type="evidence" value="ECO:0000250"/>
    <property type="project" value="UniProtKB"/>
</dbReference>
<dbReference type="GO" id="GO:0001701">
    <property type="term" value="P:in utero embryonic development"/>
    <property type="evidence" value="ECO:0000250"/>
    <property type="project" value="UniProtKB"/>
</dbReference>
<dbReference type="GO" id="GO:0006397">
    <property type="term" value="P:mRNA processing"/>
    <property type="evidence" value="ECO:0007669"/>
    <property type="project" value="UniProtKB-KW"/>
</dbReference>
<dbReference type="GO" id="GO:0045445">
    <property type="term" value="P:myoblast differentiation"/>
    <property type="evidence" value="ECO:0000250"/>
    <property type="project" value="UniProtKB"/>
</dbReference>
<dbReference type="GO" id="GO:0007399">
    <property type="term" value="P:nervous system development"/>
    <property type="evidence" value="ECO:0000250"/>
    <property type="project" value="UniProtKB"/>
</dbReference>
<dbReference type="GO" id="GO:0043484">
    <property type="term" value="P:regulation of RNA splicing"/>
    <property type="evidence" value="ECO:0000314"/>
    <property type="project" value="UniProtKB"/>
</dbReference>
<dbReference type="GO" id="GO:0008380">
    <property type="term" value="P:RNA splicing"/>
    <property type="evidence" value="ECO:0000314"/>
    <property type="project" value="UniProtKB"/>
</dbReference>
<dbReference type="FunFam" id="3.30.1370.210:FF:000004">
    <property type="entry name" value="Muscleblind like splicing regulator 1"/>
    <property type="match status" value="1"/>
</dbReference>
<dbReference type="FunFam" id="3.30.1370.210:FF:000002">
    <property type="entry name" value="Muscleblind-like 1 isoform 2"/>
    <property type="match status" value="1"/>
</dbReference>
<dbReference type="Gene3D" id="3.30.1370.210">
    <property type="match status" value="2"/>
</dbReference>
<dbReference type="InterPro" id="IPR054429">
    <property type="entry name" value="Znf-CCCH_Muscleblind-like"/>
</dbReference>
<dbReference type="InterPro" id="IPR000571">
    <property type="entry name" value="Znf_CCCH"/>
</dbReference>
<dbReference type="PANTHER" id="PTHR12675">
    <property type="entry name" value="MUSCLEBLIND-LIKE PROTEIN"/>
    <property type="match status" value="1"/>
</dbReference>
<dbReference type="PANTHER" id="PTHR12675:SF7">
    <property type="entry name" value="MUSCLEBLIND-LIKE PROTEIN 1"/>
    <property type="match status" value="1"/>
</dbReference>
<dbReference type="Pfam" id="PF00642">
    <property type="entry name" value="zf-CCCH"/>
    <property type="match status" value="1"/>
</dbReference>
<dbReference type="Pfam" id="PF22628">
    <property type="entry name" value="zf-CCCH_10"/>
    <property type="match status" value="2"/>
</dbReference>
<dbReference type="Pfam" id="PF14608">
    <property type="entry name" value="zf-CCCH_2"/>
    <property type="match status" value="1"/>
</dbReference>
<dbReference type="SMART" id="SM00356">
    <property type="entry name" value="ZnF_C3H1"/>
    <property type="match status" value="4"/>
</dbReference>
<dbReference type="PROSITE" id="PS50103">
    <property type="entry name" value="ZF_C3H1"/>
    <property type="match status" value="4"/>
</dbReference>
<sequence length="388" mass="41817">MAVSVTPIRDTKWLTLEVCREFQRGTCSRPDTECKFAHPSKSCQVENGRVIACFDSLKGRCSRENCKYLHPPPHLKTQLEINGRNNLIQQKNMAMLAQQMQLANAMMPGAPLQPVPMFSVAPSLATNASAAAFNPYLGPVSPSLVPAEILPTAPMLVTGNPGVPVPAAAAAAAQKLMRTDRLEVCREYQRGNCNRGENDCRFAHPADSTMIDTNDNTVTVCMDYIKGRCSREKCKYFHPPAHLQAKIKAAQYQVNQAAAAQAAATAAAMTQSAVKSLKRPLEATFDLGIPQAVLPPLPKRPALEKTNGATAVFNTGIFQYQQALANMQLQQHTAFLPPVPMVHGATPATVSAATTSATSVPFAATATANQIPIISAEHLTSHKYVTQM</sequence>
<gene>
    <name type="primary">MBNL1</name>
    <name type="synonym">EXP</name>
    <name type="synonym">KIAA0428</name>
    <name type="synonym">MBNL</name>
</gene>
<protein>
    <recommendedName>
        <fullName>Muscleblind-like protein 1</fullName>
    </recommendedName>
    <alternativeName>
        <fullName>Triplet-expansion RNA-binding protein</fullName>
    </alternativeName>
</protein>
<proteinExistence type="evidence at protein level"/>